<reference key="1">
    <citation type="journal article" date="2004" name="Mol. Biol. Evol.">
        <title>Identification of duplicated fourth alpha2-adrenergic receptor subtype by cloning and mapping of five receptor genes in zebrafish.</title>
        <authorList>
            <person name="Ruuskanen J.O."/>
            <person name="Xhaard H."/>
            <person name="Marjamaki A."/>
            <person name="Salaneck E."/>
            <person name="Salminen T."/>
            <person name="Yan Y.-L."/>
            <person name="Postlethwait J.H."/>
            <person name="Johnson M.S."/>
            <person name="Larhammar D."/>
            <person name="Scheinin M."/>
        </authorList>
    </citation>
    <scope>NUCLEOTIDE SEQUENCE [GENOMIC DNA]</scope>
</reference>
<reference key="2">
    <citation type="journal article" date="2005" name="Br. J. Pharmacol.">
        <title>Conserved structural, pharmacological and functional properties among the three human and five zebrafish alpha2-adrenoceptors.</title>
        <authorList>
            <person name="Ruuskanen J.O."/>
            <person name="Laurila J."/>
            <person name="Xhaard H."/>
            <person name="Rantanen V.-V."/>
            <person name="Vuoriluoto K."/>
            <person name="Wurster S."/>
            <person name="Marjamaki A."/>
            <person name="Vainio M."/>
            <person name="Johnson M.S."/>
            <person name="Scheinin M."/>
        </authorList>
    </citation>
    <scope>FUNCTION</scope>
    <scope>3D-STRUCTURE MODELING</scope>
</reference>
<accession>Q8JG70</accession>
<sequence length="408" mass="46199">MSVTPTANSTEEAANITASPRLWPYTEPASAIIILVVSLIILLTIVGNVLVIVAVLTSRALRAPQNLFLVSLACADILVATLVIPFSLANEIMGYWYFGSTWCAFYLALDVLFCTSSIVHLCAISLDRYWSVTKAVRYNLKRTPRRIKCMIAVVWLISAVISFPPLIMTKHDEKECLINDETWYILSSCAVSFFAPGLIMITVYCKIYRVAKQRSSTVFVAKNGLERQPSQSETCFVRKDKFEKESPSSNSSESAQRQEELDDIDLEESAASDSRARGSRFSKRRRVEGERRGPQRSCRVSWAAHQEPGSRQQQLASKSKVAQMREKRFTFVLAVVMGVFVLCWFPFFFTYSLQAVCGERCGPPEALFKLFFWIGYCNSSVNPIIYTIFNRDFRKAFKKVVCWSAQRT</sequence>
<gene>
    <name type="primary">adra2da</name>
</gene>
<dbReference type="EMBL" id="AY120895">
    <property type="protein sequence ID" value="AAM78031.1"/>
    <property type="molecule type" value="Genomic_DNA"/>
</dbReference>
<dbReference type="SMR" id="Q8JG70"/>
<dbReference type="FunCoup" id="Q8JG70">
    <property type="interactions" value="19"/>
</dbReference>
<dbReference type="GlyCosmos" id="Q8JG70">
    <property type="glycosylation" value="2 sites, No reported glycans"/>
</dbReference>
<dbReference type="PaxDb" id="7955-ENSDARP00000105653"/>
<dbReference type="AGR" id="ZFIN:ZDB-GENE-021010-4"/>
<dbReference type="ZFIN" id="ZDB-GENE-021010-4">
    <property type="gene designation" value="adra2da"/>
</dbReference>
<dbReference type="eggNOG" id="KOG3656">
    <property type="taxonomic scope" value="Eukaryota"/>
</dbReference>
<dbReference type="InParanoid" id="Q8JG70"/>
<dbReference type="PhylomeDB" id="Q8JG70"/>
<dbReference type="PRO" id="PR:Q8JG70"/>
<dbReference type="Proteomes" id="UP000000437">
    <property type="component" value="Unplaced"/>
</dbReference>
<dbReference type="GO" id="GO:0005886">
    <property type="term" value="C:plasma membrane"/>
    <property type="evidence" value="ECO:0000250"/>
    <property type="project" value="ZFIN"/>
</dbReference>
<dbReference type="GO" id="GO:0004938">
    <property type="term" value="F:alpha2-adrenergic receptor activity"/>
    <property type="evidence" value="ECO:0000314"/>
    <property type="project" value="UniProtKB"/>
</dbReference>
<dbReference type="GO" id="GO:0051379">
    <property type="term" value="F:epinephrine binding"/>
    <property type="evidence" value="ECO:0000318"/>
    <property type="project" value="GO_Central"/>
</dbReference>
<dbReference type="GO" id="GO:0071881">
    <property type="term" value="P:adenylate cyclase-inhibiting adrenergic receptor signaling pathway"/>
    <property type="evidence" value="ECO:0000314"/>
    <property type="project" value="UniProtKB"/>
</dbReference>
<dbReference type="CDD" id="cd15324">
    <property type="entry name" value="7tmA_alpha-2D_AR"/>
    <property type="match status" value="1"/>
</dbReference>
<dbReference type="Gene3D" id="1.20.1070.10">
    <property type="entry name" value="Rhodopsin 7-helix transmembrane proteins"/>
    <property type="match status" value="1"/>
</dbReference>
<dbReference type="InterPro" id="IPR002233">
    <property type="entry name" value="ADR_fam"/>
</dbReference>
<dbReference type="InterPro" id="IPR000276">
    <property type="entry name" value="GPCR_Rhodpsn"/>
</dbReference>
<dbReference type="InterPro" id="IPR017452">
    <property type="entry name" value="GPCR_Rhodpsn_7TM"/>
</dbReference>
<dbReference type="PANTHER" id="PTHR24248">
    <property type="entry name" value="ADRENERGIC RECEPTOR-RELATED G-PROTEIN COUPLED RECEPTOR"/>
    <property type="match status" value="1"/>
</dbReference>
<dbReference type="PANTHER" id="PTHR24248:SF0">
    <property type="entry name" value="ALPHA-2DA ADRENERGIC RECEPTOR-RELATED"/>
    <property type="match status" value="1"/>
</dbReference>
<dbReference type="Pfam" id="PF00001">
    <property type="entry name" value="7tm_1"/>
    <property type="match status" value="1"/>
</dbReference>
<dbReference type="PRINTS" id="PR01103">
    <property type="entry name" value="ADRENERGICR"/>
</dbReference>
<dbReference type="PRINTS" id="PR00237">
    <property type="entry name" value="GPCRRHODOPSN"/>
</dbReference>
<dbReference type="SMART" id="SM01381">
    <property type="entry name" value="7TM_GPCR_Srsx"/>
    <property type="match status" value="1"/>
</dbReference>
<dbReference type="SUPFAM" id="SSF81321">
    <property type="entry name" value="Family A G protein-coupled receptor-like"/>
    <property type="match status" value="1"/>
</dbReference>
<dbReference type="PROSITE" id="PS00237">
    <property type="entry name" value="G_PROTEIN_RECEP_F1_1"/>
    <property type="match status" value="1"/>
</dbReference>
<dbReference type="PROSITE" id="PS50262">
    <property type="entry name" value="G_PROTEIN_RECEP_F1_2"/>
    <property type="match status" value="1"/>
</dbReference>
<feature type="chain" id="PRO_0000069007" description="Alpha-2Da adrenergic receptor">
    <location>
        <begin position="1"/>
        <end position="408"/>
    </location>
</feature>
<feature type="topological domain" description="Extracellular" evidence="1">
    <location>
        <begin position="1"/>
        <end position="30"/>
    </location>
</feature>
<feature type="transmembrane region" description="Helical; Name=1" evidence="1">
    <location>
        <begin position="31"/>
        <end position="55"/>
    </location>
</feature>
<feature type="topological domain" description="Cytoplasmic" evidence="1">
    <location>
        <begin position="56"/>
        <end position="67"/>
    </location>
</feature>
<feature type="transmembrane region" description="Helical; Name=2" evidence="1">
    <location>
        <begin position="68"/>
        <end position="93"/>
    </location>
</feature>
<feature type="topological domain" description="Extracellular" evidence="1">
    <location>
        <begin position="94"/>
        <end position="103"/>
    </location>
</feature>
<feature type="transmembrane region" description="Helical; Name=3" evidence="1">
    <location>
        <begin position="104"/>
        <end position="126"/>
    </location>
</feature>
<feature type="topological domain" description="Cytoplasmic" evidence="1">
    <location>
        <begin position="127"/>
        <end position="147"/>
    </location>
</feature>
<feature type="transmembrane region" description="Helical; Name=4" evidence="1">
    <location>
        <begin position="148"/>
        <end position="170"/>
    </location>
</feature>
<feature type="topological domain" description="Extracellular" evidence="1">
    <location>
        <begin position="171"/>
        <end position="181"/>
    </location>
</feature>
<feature type="transmembrane region" description="Helical; Name=5" evidence="1">
    <location>
        <begin position="182"/>
        <end position="205"/>
    </location>
</feature>
<feature type="topological domain" description="Cytoplasmic" evidence="1">
    <location>
        <begin position="206"/>
        <end position="332"/>
    </location>
</feature>
<feature type="transmembrane region" description="Helical; Name=6" evidence="1">
    <location>
        <begin position="333"/>
        <end position="356"/>
    </location>
</feature>
<feature type="topological domain" description="Extracellular" evidence="1">
    <location>
        <begin position="357"/>
        <end position="369"/>
    </location>
</feature>
<feature type="transmembrane region" description="Helical; Name=7" evidence="1">
    <location>
        <begin position="370"/>
        <end position="390"/>
    </location>
</feature>
<feature type="topological domain" description="Cytoplasmic" evidence="1">
    <location>
        <begin position="391"/>
        <end position="408"/>
    </location>
</feature>
<feature type="region of interest" description="Disordered" evidence="4">
    <location>
        <begin position="242"/>
        <end position="306"/>
    </location>
</feature>
<feature type="compositionally biased region" description="Acidic residues" evidence="4">
    <location>
        <begin position="260"/>
        <end position="270"/>
    </location>
</feature>
<feature type="compositionally biased region" description="Basic residues" evidence="4">
    <location>
        <begin position="277"/>
        <end position="286"/>
    </location>
</feature>
<feature type="site" description="Implicated in ligand binding" evidence="1">
    <location>
        <position position="110"/>
    </location>
</feature>
<feature type="site" description="Implicated in catechol agonist binding and receptor activation" evidence="1">
    <location>
        <position position="188"/>
    </location>
</feature>
<feature type="site" description="Implicated in catechol agonist binding and receptor activation" evidence="1">
    <location>
        <position position="192"/>
    </location>
</feature>
<feature type="glycosylation site" description="N-linked (GlcNAc...) asparagine" evidence="2">
    <location>
        <position position="8"/>
    </location>
</feature>
<feature type="glycosylation site" description="N-linked (GlcNAc...) asparagine" evidence="2">
    <location>
        <position position="15"/>
    </location>
</feature>
<feature type="disulfide bond" evidence="3">
    <location>
        <begin position="103"/>
        <end position="176"/>
    </location>
</feature>
<organism>
    <name type="scientific">Danio rerio</name>
    <name type="common">Zebrafish</name>
    <name type="synonym">Brachydanio rerio</name>
    <dbReference type="NCBI Taxonomy" id="7955"/>
    <lineage>
        <taxon>Eukaryota</taxon>
        <taxon>Metazoa</taxon>
        <taxon>Chordata</taxon>
        <taxon>Craniata</taxon>
        <taxon>Vertebrata</taxon>
        <taxon>Euteleostomi</taxon>
        <taxon>Actinopterygii</taxon>
        <taxon>Neopterygii</taxon>
        <taxon>Teleostei</taxon>
        <taxon>Ostariophysi</taxon>
        <taxon>Cypriniformes</taxon>
        <taxon>Danionidae</taxon>
        <taxon>Danioninae</taxon>
        <taxon>Danio</taxon>
    </lineage>
</organism>
<proteinExistence type="inferred from homology"/>
<evidence type="ECO:0000250" key="1"/>
<evidence type="ECO:0000255" key="2"/>
<evidence type="ECO:0000255" key="3">
    <source>
        <dbReference type="PROSITE-ProRule" id="PRU00521"/>
    </source>
</evidence>
<evidence type="ECO:0000256" key="4">
    <source>
        <dbReference type="SAM" id="MobiDB-lite"/>
    </source>
</evidence>
<evidence type="ECO:0000269" key="5">
    <source>
    </source>
</evidence>
<protein>
    <recommendedName>
        <fullName>Alpha-2Da adrenergic receptor</fullName>
    </recommendedName>
    <alternativeName>
        <fullName>Alpha-2Da adrenoceptor</fullName>
        <shortName>Alpha(2Da)AR</shortName>
    </alternativeName>
    <alternativeName>
        <fullName>Alpha-2Da adrenoreceptor</fullName>
    </alternativeName>
</protein>
<comment type="function">
    <text evidence="5">Alpha-2 adrenergic receptors mediate the catecholamine-induced inhibition of adenylate cyclase through the action of G proteins. The order of potency for this receptor is dexmedetomidine &gt; norepinephrine &gt; epinephrine &gt; oxymetazoline.</text>
</comment>
<comment type="subcellular location">
    <subcellularLocation>
        <location>Cell membrane</location>
        <topology>Multi-pass membrane protein</topology>
    </subcellularLocation>
</comment>
<comment type="similarity">
    <text evidence="3">Belongs to the G-protein coupled receptor 1 family. Adrenergic receptor subfamily. ADRA2D sub-subfamily.</text>
</comment>
<name>AA2DA_DANRE</name>
<keyword id="KW-1003">Cell membrane</keyword>
<keyword id="KW-1015">Disulfide bond</keyword>
<keyword id="KW-0297">G-protein coupled receptor</keyword>
<keyword id="KW-0325">Glycoprotein</keyword>
<keyword id="KW-0472">Membrane</keyword>
<keyword id="KW-0675">Receptor</keyword>
<keyword id="KW-1185">Reference proteome</keyword>
<keyword id="KW-0807">Transducer</keyword>
<keyword id="KW-0812">Transmembrane</keyword>
<keyword id="KW-1133">Transmembrane helix</keyword>